<sequence>MAKMGKYGLGFKWAPEFPWMLPNASEKLGNPERSEEDGFCPSAAQEPKVKGKTLVNHVRVDCSRLPALECCVQSAIIRDIFVDEDPQKVEASTMMALQFGSAVLVKPSKRLSVQAWAKLGVLPKTPAMGLFKRFCLCNTRECVCDAHVAFQLFTVQPDGVCLGNGRFIGWFVPVTAIPEYAKQWLQPWSILLRKGGNKGSVTSGHFRRAVTMPVYDFNVEDACEEVHLNPRGKYSCKAYALLRGYRGVKPILFVDQYGCDYTGCLAKGLEDYGDLTLSEMKELSPVWRDSLDNEVVVAWHVDRDPRAVMRLQTLATVRSIEYVGQPIEDMVDGDVVMREPAHLLAPNAIVKRLPRLVETMLYTDSSVTEFCYKTKLCDCGFITQFGYVDCCGDTCGFRGWVPGNMMDGFPCPGCCKSYMPWELEAQSSGVIPEGGVLFTQSTDTVNRESFKLYGHAVVPFGGAAYWSPYPGMWLPVIWSSVKSYSYLTYTGVVGCKAIVQETDAICRFLYMDYVQHKCGNLEQRAILGLDDVYHRQLLVNRGDYSLLLENVDLFVKRRAEFACKFATCGDGLVPLLLDGLVPRSYYLIKSGQAFTSLMVNFSREVVDMCMDMALLFMHDVKVATKYVKKVTGKVAVRFKALGIAVVRKITEWFDLAVDTAASAAGWLCYQLVNGLFAVANGVITFIQEVPELVKNFVDKFKTFFKVLIDSMSVSILSGLTVVKTASNRVCLAGSKVYEVVQKSLPAYIMPVGCSEATCLVGEIEPAVFEDDVVDVVKAPLTYQGCCKPPSSFEKICIVDKLYMAKCGDQFYPVVVDNDTVGVLDQCWRFPCAGKKVVFNDKPKVKEVPSTRKIKIIFALDATFDSVLSKACSEFEVDKDVTLDELLDVVLDAVESTLSPCKEHGVIGTKVCALLERLVDDYVYLFDEGGEEVIASRMYCSFSAPDEDCVATDVVYADENQDDDADDPVVLVADTQEEDGVAREQVDSADSEICVAHTGGQEMTEPDVVGSQTPIASAEETEVGEACDREGIAEVKATVCADALDACPDQVEAFDIEKVEDSILSELQTELNAPADKTYEDVLAFDAIYSETLSAFYAVPSDETHFKVCGFYSPAIERTNCWLRSTLIVMQSLPLEFKDLGMQKLWLSYKAGYDQCFVDKLVKSAPKSIILPQGGYVADFAYFFLSQCSFKVHANWRCLKCGMELKLQGLDAVFFYGDVVSHMCKCGNSMTLLSADIPYTFDFGVRDDKFCAFYTPRKVFRAACAVDVNDCHSMAVVDGKQIDGKVVTKFNGDKFDFMVGHGMTFSMSPFEIAQLYGSCITPNVCFVKGDVIKVLRRVGAEVIVNPANGRMAHGAGVAGAIAKAAGKAFINETADMVKAQGVCQVGGCYESTGGKLCKKVLNIVGPDARGHGNECYSLLERAYQHINKCDNVVTTLISAGIFSVPTDVSLTYLLGVVTKNVILVSNNQDDFDVIEKCQVTSVAGTKALSFQLAKNLCRDVKFVTNACSSLFSESSFVSSYDVLQEVEALRHDIQLDDDARVFVQANMDCLPTDWRLVNKFDSVDGVRTIKYFECPGEVFVSSQGKKFGYVQNGSFKEASVSQIRALLANKVDVLCTVDGVNFRSCCVAEGEVFGKTLGSVFCDGINVTKVRCSAIHKGKVFFQYSGLSAADLAAVKDAFGFDEPQLLQYYSMLGMCKWPVVVCGNYFAFKQSNNNCYINVACLMLQHLSLKFPKWQWRRPGNEFRSGKPLRFVSLVLAKGSFKFNEPSDSTDFIRVELREADLSGATCDLEFICKCGVKQEQRKGVDAVMHFGTLDKSGLVKGYNIACTCGDKLVHCTQFNVPFLICSNTPEGKKLPDDVVAANIFTGGSVGHYTHVKCKPKYQLYDACNVSKVSEAKGNFTDCLYLKNLKQTFSSVLTTYYLDDVKCVAYKPDLSQYYCESGKYYTKPIIKAQFRTFEKVEGVYTNFKLVGHDIAEKLNAKLGFDCNSPFMEYKITEWPTATGDVVLASDDLYVSRYSGGCVTFGKPVIWRGHEEASLKSLTYFNRPSVVCENKFNVLPVDVSEPTDRRPVPSAVLVTGAASGADASAISTEPGTAKEQKACASDSVEDQIVMEAQKKSSVTTVAVKEVKLNGVKKPVKWNCSVVVNDPTSETKVVKSLSIVDVYDMFLTGCRYVVWTANELSRLINSPTVREYVKWGMSKLIIPANLLLLRDEKQEFVAPKVVKAKAIACYGAVKWFLLYCFSWIKFNTDNKVIYTTEVASKLTFKLCCLAFKNALQTFNWSVVSRGFFLVATVFLLWFNFLYANVILSDFYLPNIGPLPMFVGQIVAWVKTTFGVLTICDFYQVTDLGYRSSFCNGSMVCELCFSGFDMLDNYESINVVQHVVDRRVSFDYISLFKLVVELVIGYSLYTVCFYPLFVLVGMQLLTTWLPEFFMLGTMHWSARLFVFVANMLPAFTLLRFYIVVTAMYKVYCLCRHVMYGCSKPGCLFCYKRNRSVRVKCSTVVGGSLRYYDVMANGGTGFCTKHQWNCLNCNSWKPGNTFITHEAAADLSKELKRPVNPTDSAYYSVIEVKQVGCSMRLFYERDGQRVYDDVSASLFVDMNGLLHSKVKGVPETHVVVVENEADKAGFLNAAVFYAQSLYRPMLMVEKKLITTANTGLSVSRTMFDLYVYSLLRHLDVDRKSLTSFVNAAHNSLKEGVQLEQVMDTFVGCARRKCAIDSDVETKSITKSVMAAVNAGVEVTDESCNNLVPTYVKSDTIVAADLGVLIQNNAKHVQSNVAKAANVACIWSVDAFNQLSADLQHRLRKACVKTGLKIKLTYNKQEANVPILTTPFSLKGGAVFSRVLQWLFVANLICFIVLWALMPTYAVHKSDMQLPLYASFKVIDNGVLRDVSVTDACFANKFNQFDQWYESTFGLVYYRNSKACPVVVAVIDQDIGHTLFNVPTKVLRYGFHVLHFITHAFATDRVQCYTPHMQIPYDNFYASGCVLSSLCTMLAHADGTPHPYCYTEGVMHNASLYSSLVPHVRYNLASSNGYIRFPEVVSEGIVRVVRTRSMTYCRVGLCEEAEEGICFNFNSSWVLNNPYYRAMPGTFCGRNAFDLIHQVLGGLVQPIDFFALTASSVAGAILAIIVVLAFYYLIKLKRAFGDYTSVVVINVIVWCINFLMLFVFQVYPTLSCLYACFYFYTTLYFPSEISVVMHLQWLVMYGAIMPLWFCITYVAVVVSNHALWLFSYCRKIGTDVRSDGTFEEMALTTFMITKESYCKLKNSVSDVAFNRYLSLYNKYRYFSGKMDTATYREAACSQLAKAMETFNHNNGNDVLYQPPTASVTTSFLQSGIVKMVSPTSKVEPCVVSVTYGNMTLNGLWLDDKVYCPRHVICSSADMTDPDYPNLLCRVTSSDFCVMSDRMSLTVMSYQMQGSLLVLTVTLQNPNTPKYSFGVVKPGETFTVLAAYNGRPQGAFHVVMRSSHTIKGSFLCGSCGSVGYVLTGDSVRFVYMHQLELSTGCHTGTDFSGNFYGPYRDAQVVQLPVQDYTQTVNVVAWLYAAILNRCNWFVQSDSCSLEEFNVWAMTNGFSSIKADLVLDALASMTGVTVEQVLAAIKRLHSGFQGKQILGSCVLEDELTPSDVYQQLAGVKLQSKRTRVIKGTCCWILASTFLFCSIISAFVKWTMFMYVTTHMLGVTLCALCFVIFAMLLIKHKHLYLTMYIMPVLCTLFYTNYLVVGYKQSFRGLAYAWLSYFVPAVDYTYMDEVLYGVVLLVAMVFVTMRSINHDVFSTMFLVGRLVSLVSMWYFGANLEEEVLLFLTSLFGTYTWTTMLSLATAKVIAKWLAVNVLYFTDIPQIKLVLLSYLCIGYVCCCYWGVLSLLNSIFRMPLGVYNYKISVQELRYMNANGLRPPRNSFEALMLNFKLLGIGGVPVIEVSQIQSRLTDVKCANVVLLNCLQHLHIASNSKLWQYCSTLHNEILATSDLSVAFDKLAQLLVVLFANPAAVDSKCLASIEEVSDDYVRDNTVLQALQSEFVNMASFVEYELAKKNLDEAKASGSANQQQIKQLEKACNIAKSAYERDRAVARKLERMADLALTNMYKEARINDKKSKVVSALQTMLFSMVRKLDNQALNSILDNAVKGCVPLNAIPPLTSNTLTIIVPDKQVFDQVVDNVYVTYAPNVWHIQSIQDADGAVKQLNEIDVNSTWPLVISANRHNEVSTVVLQNNELMPQKLRTQVVNSGSDMNCNIPTQCYYNTTGTGKIVYAILSDCDGLKYTKIVKEDGNCVVLELDPPCKFSVQDVKGLKIKYLYFVKGCNTLARGWVVGTLSSTVRLQAGTATEYASNSAILSLCAFSVDPKKTYLDYIQQGGVPVTNCVKMLCDHAGTGMAITIKPEATTNQDSYGGASVCIYCRSRVEHPDVDGLCKLRGKFVQVPLGIKDPVSYVLTHDVCQVCGFWRDGSCSCVGTGSQFQSKDTNFLNGFGVQV</sequence>
<evidence type="ECO:0000250" key="1"/>
<evidence type="ECO:0000250" key="2">
    <source>
        <dbReference type="UniProtKB" id="P0DTC1"/>
    </source>
</evidence>
<evidence type="ECO:0000255" key="3"/>
<evidence type="ECO:0000255" key="4">
    <source>
        <dbReference type="PROSITE-ProRule" id="PRU00214"/>
    </source>
</evidence>
<evidence type="ECO:0000255" key="5">
    <source>
        <dbReference type="PROSITE-ProRule" id="PRU00444"/>
    </source>
</evidence>
<evidence type="ECO:0000255" key="6">
    <source>
        <dbReference type="PROSITE-ProRule" id="PRU00490"/>
    </source>
</evidence>
<evidence type="ECO:0000255" key="7">
    <source>
        <dbReference type="PROSITE-ProRule" id="PRU00772"/>
    </source>
</evidence>
<evidence type="ECO:0000255" key="8">
    <source>
        <dbReference type="PROSITE-ProRule" id="PRU01289"/>
    </source>
</evidence>
<evidence type="ECO:0000255" key="9">
    <source>
        <dbReference type="PROSITE-ProRule" id="PRU01290"/>
    </source>
</evidence>
<evidence type="ECO:0000255" key="10">
    <source>
        <dbReference type="PROSITE-ProRule" id="PRU01291"/>
    </source>
</evidence>
<evidence type="ECO:0000255" key="11">
    <source>
        <dbReference type="PROSITE-ProRule" id="PRU01294"/>
    </source>
</evidence>
<evidence type="ECO:0000255" key="12">
    <source>
        <dbReference type="PROSITE-ProRule" id="PRU01295"/>
    </source>
</evidence>
<evidence type="ECO:0000255" key="13">
    <source>
        <dbReference type="PROSITE-ProRule" id="PRU01296"/>
    </source>
</evidence>
<evidence type="ECO:0000255" key="14">
    <source>
        <dbReference type="PROSITE-ProRule" id="PRU01297"/>
    </source>
</evidence>
<evidence type="ECO:0000255" key="15">
    <source>
        <dbReference type="PROSITE-ProRule" id="PRU01307"/>
    </source>
</evidence>
<evidence type="ECO:0000255" key="16">
    <source>
        <dbReference type="PROSITE-ProRule" id="PRU01308"/>
    </source>
</evidence>
<evidence type="ECO:0000255" key="17">
    <source>
        <dbReference type="PROSITE-ProRule" id="PRU01333"/>
    </source>
</evidence>
<evidence type="ECO:0000255" key="18">
    <source>
        <dbReference type="PROSITE-ProRule" id="PRU01334"/>
    </source>
</evidence>
<evidence type="ECO:0000255" key="19">
    <source>
        <dbReference type="PROSITE-ProRule" id="PRU01335"/>
    </source>
</evidence>
<evidence type="ECO:0000255" key="20">
    <source>
        <dbReference type="PROSITE-ProRule" id="PRU01336"/>
    </source>
</evidence>
<evidence type="ECO:0000255" key="21">
    <source>
        <dbReference type="PROSITE-ProRule" id="PRU01337"/>
    </source>
</evidence>
<evidence type="ECO:0000255" key="22">
    <source>
        <dbReference type="PROSITE-ProRule" id="PRU01338"/>
    </source>
</evidence>
<evidence type="ECO:0000269" key="23">
    <source>
    </source>
</evidence>
<evidence type="ECO:0000305" key="24"/>
<feature type="chain" id="PRO_0000338290" description="Replicase polyprotein 1a">
    <location>
        <begin position="1"/>
        <end position="4474"/>
    </location>
</feature>
<feature type="chain" id="PRO_0000338291" description="Non-structural protein 1" evidence="24">
    <location>
        <begin position="1"/>
        <end position="247"/>
    </location>
</feature>
<feature type="chain" id="PRO_0000338292" description="Non-structural protein 2" evidence="24">
    <location>
        <begin position="248"/>
        <end position="832"/>
    </location>
</feature>
<feature type="chain" id="PRO_0000338293" description="Papain-like protease nsp3" evidence="24">
    <location>
        <begin position="833"/>
        <end position="2840"/>
    </location>
</feature>
<feature type="chain" id="PRO_0000338294" description="Non-structural protein 4" evidence="24">
    <location>
        <begin position="2841"/>
        <end position="3336"/>
    </location>
</feature>
<feature type="chain" id="PRO_0000338295" description="3C-like proteinase nsp5" evidence="24">
    <location>
        <begin position="3337"/>
        <end position="3639"/>
    </location>
</feature>
<feature type="chain" id="PRO_0000338296" description="Non-structural protein 6" evidence="24">
    <location>
        <begin position="3640"/>
        <end position="3927"/>
    </location>
</feature>
<feature type="chain" id="PRO_0000338297" description="Non-structural protein 7" evidence="24">
    <location>
        <begin position="3928"/>
        <end position="4019"/>
    </location>
</feature>
<feature type="chain" id="PRO_0000338298" description="Non-structural protein 8">
    <location>
        <begin position="4020"/>
        <end position="4213"/>
    </location>
</feature>
<feature type="chain" id="PRO_0000338299" description="RNA-capping enzyme subunit nsp9" evidence="24">
    <location>
        <begin position="4214"/>
        <end position="4323"/>
    </location>
</feature>
<feature type="chain" id="PRO_0000338301" description="Non-structural protein 11" evidence="3">
    <location>
        <begin position="4323"/>
        <end position="4474"/>
    </location>
</feature>
<feature type="chain" id="PRO_0000338300" description="Non-structural protein 10" evidence="24">
    <location>
        <begin position="4324"/>
        <end position="4460"/>
    </location>
</feature>
<feature type="transmembrane region" description="Helical" evidence="3">
    <location>
        <begin position="2289"/>
        <end position="2309"/>
    </location>
</feature>
<feature type="transmembrane region" description="Helical" evidence="3">
    <location>
        <begin position="2320"/>
        <end position="2340"/>
    </location>
</feature>
<feature type="transmembrane region" description="Helical" evidence="3">
    <location>
        <begin position="2403"/>
        <end position="2423"/>
    </location>
</feature>
<feature type="transmembrane region" description="Helical" evidence="3">
    <location>
        <begin position="2445"/>
        <end position="2465"/>
    </location>
</feature>
<feature type="transmembrane region" description="Helical" evidence="3">
    <location>
        <begin position="2846"/>
        <end position="2866"/>
    </location>
</feature>
<feature type="transmembrane region" description="Helical" evidence="3">
    <location>
        <begin position="3099"/>
        <end position="3119"/>
    </location>
</feature>
<feature type="transmembrane region" description="Helical" evidence="3">
    <location>
        <begin position="3121"/>
        <end position="3141"/>
    </location>
</feature>
<feature type="transmembrane region" description="Helical" evidence="3">
    <location>
        <begin position="3153"/>
        <end position="3173"/>
    </location>
</feature>
<feature type="transmembrane region" description="Helical" evidence="3">
    <location>
        <begin position="3180"/>
        <end position="3200"/>
    </location>
</feature>
<feature type="transmembrane region" description="Helical" evidence="3">
    <location>
        <begin position="3205"/>
        <end position="3225"/>
    </location>
</feature>
<feature type="transmembrane region" description="Helical" evidence="3">
    <location>
        <begin position="3648"/>
        <end position="3668"/>
    </location>
</feature>
<feature type="transmembrane region" description="Helical" evidence="3">
    <location>
        <begin position="3678"/>
        <end position="3698"/>
    </location>
</feature>
<feature type="transmembrane region" description="Helical" evidence="3">
    <location>
        <begin position="3705"/>
        <end position="3725"/>
    </location>
</feature>
<feature type="transmembrane region" description="Helical" evidence="3">
    <location>
        <begin position="3748"/>
        <end position="3768"/>
    </location>
</feature>
<feature type="transmembrane region" description="Helical" evidence="3">
    <location>
        <begin position="3775"/>
        <end position="3795"/>
    </location>
</feature>
<feature type="transmembrane region" description="Helical" evidence="3">
    <location>
        <begin position="3802"/>
        <end position="3822"/>
    </location>
</feature>
<feature type="transmembrane region" description="Helical" evidence="3">
    <location>
        <begin position="3846"/>
        <end position="3866"/>
    </location>
</feature>
<feature type="domain" description="CoV Nsp1 globular" evidence="15">
    <location>
        <begin position="54"/>
        <end position="196"/>
    </location>
</feature>
<feature type="domain" description="BetaCoV Nsp1 C-terminal" evidence="16">
    <location>
        <begin position="217"/>
        <end position="247"/>
    </location>
</feature>
<feature type="domain" description="CoV Nsp2 N-terminal" evidence="17">
    <location>
        <begin position="251"/>
        <end position="513"/>
    </location>
</feature>
<feature type="domain" description="CoV Nsp2 middle" evidence="18">
    <location>
        <begin position="518"/>
        <end position="706"/>
    </location>
</feature>
<feature type="domain" description="CoV Nsp2 C-terminal" evidence="19">
    <location>
        <begin position="726"/>
        <end position="832"/>
    </location>
</feature>
<feature type="domain" description="Ubiquitin-like 1" evidence="4">
    <location>
        <begin position="834"/>
        <end position="946"/>
    </location>
</feature>
<feature type="domain" description="Peptidase C16 1" evidence="5">
    <location>
        <begin position="1083"/>
        <end position="1320"/>
    </location>
</feature>
<feature type="domain" description="Macro" evidence="6">
    <location>
        <begin position="1321"/>
        <end position="1481"/>
    </location>
</feature>
<feature type="domain" description="DPUP" evidence="8">
    <location>
        <begin position="1536"/>
        <end position="1608"/>
    </location>
</feature>
<feature type="domain" description="Ubiquitin-like 2" evidence="4">
    <location>
        <begin position="1607"/>
        <end position="1662"/>
    </location>
</feature>
<feature type="domain" description="Peptidase C16 2" evidence="5">
    <location>
        <begin position="1677"/>
        <end position="1936"/>
    </location>
</feature>
<feature type="domain" description="Nucleic acid-binding" evidence="9">
    <location>
        <begin position="1950"/>
        <end position="2051"/>
    </location>
</feature>
<feature type="domain" description="G2M" evidence="22">
    <location>
        <begin position="2106"/>
        <end position="2259"/>
    </location>
</feature>
<feature type="domain" description="3Ecto" evidence="21">
    <location>
        <begin position="2325"/>
        <end position="2386"/>
    </location>
</feature>
<feature type="domain" description="CoV Nsp3 Y" evidence="20">
    <location>
        <begin position="2473"/>
        <end position="2840"/>
    </location>
</feature>
<feature type="domain" description="Nsp4C" evidence="10">
    <location>
        <begin position="3239"/>
        <end position="3336"/>
    </location>
</feature>
<feature type="domain" description="Peptidase C30" evidence="7">
    <location>
        <begin position="3337"/>
        <end position="3639"/>
    </location>
</feature>
<feature type="domain" description="RdRp Nsp7 cofactor" evidence="11">
    <location>
        <begin position="3928"/>
        <end position="4016"/>
    </location>
</feature>
<feature type="domain" description="RdRp Nsp8 cofactor" evidence="12">
    <location>
        <begin position="4017"/>
        <end position="4213"/>
    </location>
</feature>
<feature type="domain" description="Nsp9 ssRNA-binding" evidence="13">
    <location>
        <begin position="4214"/>
        <end position="4323"/>
    </location>
</feature>
<feature type="domain" description="ExoN/MTase coactivator" evidence="14">
    <location>
        <begin position="4324"/>
        <end position="4461"/>
    </location>
</feature>
<feature type="zinc finger region" description="C4-type 1" evidence="5">
    <location>
        <begin position="1197"/>
        <end position="1225"/>
    </location>
</feature>
<feature type="zinc finger region" description="C4-type 2" evidence="5">
    <location>
        <begin position="1793"/>
        <end position="1829"/>
    </location>
</feature>
<feature type="zinc finger region" evidence="1">
    <location>
        <begin position="4397"/>
        <end position="4413"/>
    </location>
</feature>
<feature type="zinc finger region" evidence="1">
    <location>
        <begin position="4439"/>
        <end position="4452"/>
    </location>
</feature>
<feature type="region of interest" description="C4" evidence="17">
    <location>
        <begin position="390"/>
        <end position="414"/>
    </location>
</feature>
<feature type="region of interest" description="HD1">
    <location>
        <begin position="2228"/>
        <end position="2465"/>
    </location>
</feature>
<feature type="region of interest" description="Y1" evidence="20">
    <location>
        <begin position="2473"/>
        <end position="2563"/>
    </location>
</feature>
<feature type="region of interest" description="ZF1" evidence="20">
    <location>
        <begin position="2477"/>
        <end position="2490"/>
    </location>
</feature>
<feature type="region of interest" description="ZF2" evidence="20">
    <location>
        <begin position="2523"/>
        <end position="2533"/>
    </location>
</feature>
<feature type="region of interest" description="CoV-Y" evidence="20">
    <location>
        <begin position="2564"/>
        <end position="2840"/>
    </location>
</feature>
<feature type="region of interest" description="Y2" evidence="20">
    <location>
        <begin position="2564"/>
        <end position="2656"/>
    </location>
</feature>
<feature type="region of interest" description="Y3" evidence="20">
    <location>
        <begin position="2657"/>
        <end position="2739"/>
    </location>
</feature>
<feature type="region of interest" description="Y4" evidence="20">
    <location>
        <begin position="2740"/>
        <end position="2840"/>
    </location>
</feature>
<feature type="region of interest" description="HD2">
    <location>
        <begin position="2846"/>
        <end position="3225"/>
    </location>
</feature>
<feature type="region of interest" description="HD3">
    <location>
        <begin position="3648"/>
        <end position="3866"/>
    </location>
</feature>
<feature type="active site" description="For PL1-PRO activity" evidence="5">
    <location>
        <position position="1120"/>
    </location>
</feature>
<feature type="active site" description="For PL1-PRO activity" evidence="5">
    <location>
        <position position="1271"/>
    </location>
</feature>
<feature type="active site" description="For PL1-PRO activity" evidence="5">
    <location>
        <position position="1282"/>
    </location>
</feature>
<feature type="active site" description="For PL2-PRO activity" evidence="5">
    <location>
        <position position="1715"/>
    </location>
</feature>
<feature type="active site" description="For PL2-PRO activity" evidence="5">
    <location>
        <position position="1872"/>
    </location>
</feature>
<feature type="active site" description="For PL2-PRO activity" evidence="5">
    <location>
        <position position="1886"/>
    </location>
</feature>
<feature type="active site" description="For 3CL-PRO activity" evidence="7">
    <location>
        <position position="3377"/>
    </location>
</feature>
<feature type="active site" description="For 3CL-PRO activity" evidence="7">
    <location>
        <position position="3481"/>
    </location>
</feature>
<feature type="binding site" evidence="17">
    <location>
        <position position="390"/>
    </location>
    <ligand>
        <name>Zn(2+)</name>
        <dbReference type="ChEBI" id="CHEBI:29105"/>
        <label>1</label>
    </ligand>
</feature>
<feature type="binding site" evidence="17">
    <location>
        <position position="395"/>
    </location>
    <ligand>
        <name>Zn(2+)</name>
        <dbReference type="ChEBI" id="CHEBI:29105"/>
        <label>1</label>
    </ligand>
</feature>
<feature type="binding site" evidence="17">
    <location>
        <position position="411"/>
    </location>
    <ligand>
        <name>Zn(2+)</name>
        <dbReference type="ChEBI" id="CHEBI:29105"/>
        <label>1</label>
    </ligand>
</feature>
<feature type="binding site" evidence="17">
    <location>
        <position position="414"/>
    </location>
    <ligand>
        <name>Zn(2+)</name>
        <dbReference type="ChEBI" id="CHEBI:29105"/>
        <label>1</label>
    </ligand>
</feature>
<feature type="binding site" evidence="5">
    <location>
        <position position="1197"/>
    </location>
    <ligand>
        <name>Zn(2+)</name>
        <dbReference type="ChEBI" id="CHEBI:29105"/>
        <label>2</label>
    </ligand>
</feature>
<feature type="binding site" evidence="5">
    <location>
        <position position="1200"/>
    </location>
    <ligand>
        <name>Zn(2+)</name>
        <dbReference type="ChEBI" id="CHEBI:29105"/>
        <label>2</label>
    </ligand>
</feature>
<feature type="binding site" evidence="5">
    <location>
        <position position="1223"/>
    </location>
    <ligand>
        <name>Zn(2+)</name>
        <dbReference type="ChEBI" id="CHEBI:29105"/>
        <label>2</label>
    </ligand>
</feature>
<feature type="binding site" evidence="5">
    <location>
        <position position="1225"/>
    </location>
    <ligand>
        <name>Zn(2+)</name>
        <dbReference type="ChEBI" id="CHEBI:29105"/>
        <label>2</label>
    </ligand>
</feature>
<feature type="binding site" evidence="5">
    <location>
        <position position="1793"/>
    </location>
    <ligand>
        <name>Zn(2+)</name>
        <dbReference type="ChEBI" id="CHEBI:29105"/>
        <label>3</label>
    </ligand>
</feature>
<feature type="binding site" evidence="5">
    <location>
        <position position="1795"/>
    </location>
    <ligand>
        <name>Zn(2+)</name>
        <dbReference type="ChEBI" id="CHEBI:29105"/>
        <label>3</label>
    </ligand>
</feature>
<feature type="binding site" evidence="5">
    <location>
        <position position="1827"/>
    </location>
    <ligand>
        <name>Zn(2+)</name>
        <dbReference type="ChEBI" id="CHEBI:29105"/>
        <label>3</label>
    </ligand>
</feature>
<feature type="binding site" evidence="5">
    <location>
        <position position="1829"/>
    </location>
    <ligand>
        <name>Zn(2+)</name>
        <dbReference type="ChEBI" id="CHEBI:29105"/>
        <label>3</label>
    </ligand>
</feature>
<feature type="binding site" evidence="20">
    <location>
        <position position="2477"/>
    </location>
    <ligand>
        <name>Zn(2+)</name>
        <dbReference type="ChEBI" id="CHEBI:29105"/>
        <label>4</label>
    </ligand>
</feature>
<feature type="binding site" evidence="20">
    <location>
        <position position="2482"/>
    </location>
    <ligand>
        <name>Zn(2+)</name>
        <dbReference type="ChEBI" id="CHEBI:29105"/>
        <label>4</label>
    </ligand>
</feature>
<feature type="binding site" evidence="20">
    <location>
        <position position="2487"/>
    </location>
    <ligand>
        <name>Zn(2+)</name>
        <dbReference type="ChEBI" id="CHEBI:29105"/>
        <label>4</label>
    </ligand>
</feature>
<feature type="binding site" evidence="20">
    <location>
        <position position="2490"/>
    </location>
    <ligand>
        <name>Zn(2+)</name>
        <dbReference type="ChEBI" id="CHEBI:29105"/>
        <label>4</label>
    </ligand>
</feature>
<feature type="binding site" evidence="20">
    <location>
        <position position="2523"/>
    </location>
    <ligand>
        <name>Zn(2+)</name>
        <dbReference type="ChEBI" id="CHEBI:29105"/>
        <label>5</label>
    </ligand>
</feature>
<feature type="binding site" evidence="20">
    <location>
        <position position="2526"/>
    </location>
    <ligand>
        <name>Zn(2+)</name>
        <dbReference type="ChEBI" id="CHEBI:29105"/>
        <label>5</label>
    </ligand>
</feature>
<feature type="binding site" evidence="20">
    <location>
        <position position="2530"/>
    </location>
    <ligand>
        <name>Zn(2+)</name>
        <dbReference type="ChEBI" id="CHEBI:29105"/>
        <label>5</label>
    </ligand>
</feature>
<feature type="binding site" evidence="20">
    <location>
        <position position="2533"/>
    </location>
    <ligand>
        <name>Zn(2+)</name>
        <dbReference type="ChEBI" id="CHEBI:29105"/>
        <label>5</label>
    </ligand>
</feature>
<feature type="binding site" evidence="14">
    <location>
        <position position="4397"/>
    </location>
    <ligand>
        <name>Zn(2+)</name>
        <dbReference type="ChEBI" id="CHEBI:29105"/>
        <label>6</label>
    </ligand>
</feature>
<feature type="binding site" evidence="14">
    <location>
        <position position="4400"/>
    </location>
    <ligand>
        <name>Zn(2+)</name>
        <dbReference type="ChEBI" id="CHEBI:29105"/>
        <label>6</label>
    </ligand>
</feature>
<feature type="binding site" evidence="14">
    <location>
        <position position="4406"/>
    </location>
    <ligand>
        <name>Zn(2+)</name>
        <dbReference type="ChEBI" id="CHEBI:29105"/>
        <label>6</label>
    </ligand>
</feature>
<feature type="binding site" evidence="14">
    <location>
        <position position="4413"/>
    </location>
    <ligand>
        <name>Zn(2+)</name>
        <dbReference type="ChEBI" id="CHEBI:29105"/>
        <label>6</label>
    </ligand>
</feature>
<feature type="binding site" evidence="14">
    <location>
        <position position="4439"/>
    </location>
    <ligand>
        <name>Zn(2+)</name>
        <dbReference type="ChEBI" id="CHEBI:29105"/>
        <label>7</label>
    </ligand>
</feature>
<feature type="binding site" evidence="14">
    <location>
        <position position="4442"/>
    </location>
    <ligand>
        <name>Zn(2+)</name>
        <dbReference type="ChEBI" id="CHEBI:29105"/>
        <label>7</label>
    </ligand>
</feature>
<feature type="binding site" evidence="14">
    <location>
        <position position="4450"/>
    </location>
    <ligand>
        <name>Zn(2+)</name>
        <dbReference type="ChEBI" id="CHEBI:29105"/>
        <label>7</label>
    </ligand>
</feature>
<feature type="binding site" evidence="14">
    <location>
        <position position="4452"/>
    </location>
    <ligand>
        <name>Zn(2+)</name>
        <dbReference type="ChEBI" id="CHEBI:29105"/>
        <label>7</label>
    </ligand>
</feature>
<feature type="site" description="Cleavage; by PL1-PRO" evidence="24">
    <location>
        <begin position="247"/>
        <end position="248"/>
    </location>
</feature>
<feature type="site" description="Cleavage; by PL1-PRO" evidence="24">
    <location>
        <begin position="832"/>
        <end position="833"/>
    </location>
</feature>
<feature type="site" description="Cleavage; by PL2-PRO" evidence="24">
    <location>
        <begin position="2840"/>
        <end position="2841"/>
    </location>
</feature>
<feature type="site" description="Cleavage; by 3CL-PRO" evidence="24">
    <location>
        <begin position="3336"/>
        <end position="3337"/>
    </location>
</feature>
<feature type="site" description="Cleavage; by 3CL-PRO" evidence="24">
    <location>
        <begin position="3639"/>
        <end position="3640"/>
    </location>
</feature>
<feature type="site" description="Cleavage; by 3CL-PRO" evidence="24">
    <location>
        <begin position="3927"/>
        <end position="3928"/>
    </location>
</feature>
<feature type="site" description="Cleavage; by 3CL-PRO" evidence="24">
    <location>
        <begin position="4019"/>
        <end position="4020"/>
    </location>
</feature>
<feature type="site" description="Cleavage; by 3CL-PRO" evidence="24">
    <location>
        <begin position="4213"/>
        <end position="4214"/>
    </location>
</feature>
<feature type="site" description="Cleavage; by 3CL-PRO" evidence="24">
    <location>
        <begin position="4323"/>
        <end position="4324"/>
    </location>
</feature>
<feature type="site" description="Cleavage; by 3CL-PRO" evidence="24">
    <location>
        <begin position="4460"/>
        <end position="4461"/>
    </location>
</feature>
<feature type="disulfide bond" evidence="21">
    <location>
        <begin position="2341"/>
        <end position="2365"/>
    </location>
</feature>
<feature type="disulfide bond" evidence="21">
    <location>
        <begin position="2356"/>
        <end position="2362"/>
    </location>
</feature>
<feature type="mutagenesis site" description="No processing between p210 and peptide HD2." evidence="23">
    <original>F</original>
    <variation>A</variation>
    <location>
        <position position="2835"/>
    </location>
</feature>
<feature type="mutagenesis site" description="No effect." evidence="23">
    <original>S</original>
    <variation>A</variation>
    <location>
        <position position="2836"/>
    </location>
</feature>
<feature type="mutagenesis site" description="No effect." evidence="23">
    <original>L</original>
    <variation>A</variation>
    <location>
        <position position="2837"/>
    </location>
</feature>
<feature type="mutagenesis site" description="No effect." evidence="23">
    <original>K</original>
    <variation>A</variation>
    <location>
        <position position="2838"/>
    </location>
</feature>
<feature type="mutagenesis site" description="No effect." evidence="23">
    <original>K</original>
    <variation>N</variation>
    <location>
        <position position="2838"/>
    </location>
</feature>
<feature type="mutagenesis site" description="Partial processing between p210 and peptide HD2." evidence="23">
    <original>G</original>
    <variation>A</variation>
    <location>
        <position position="2839"/>
    </location>
</feature>
<feature type="mutagenesis site" description="No processing between p210 and peptide HD2." evidence="23">
    <original>G</original>
    <variation>N</variation>
    <location>
        <position position="2839"/>
    </location>
</feature>
<feature type="mutagenesis site" description="No processing between p210 and peptide HD2." evidence="23">
    <original>G</original>
    <variation>V</variation>
    <location>
        <position position="2839"/>
    </location>
</feature>
<feature type="mutagenesis site" description="No processing between p210 and peptide HD2." evidence="23">
    <original>G</original>
    <variation>A</variation>
    <location>
        <position position="2840"/>
    </location>
</feature>
<feature type="mutagenesis site" description="No processing between p210 and peptide HD2." evidence="23">
    <original>G</original>
    <variation>N</variation>
    <location>
        <position position="2840"/>
    </location>
</feature>
<feature type="mutagenesis site" description="No processing between p210 and peptide HD2." evidence="23">
    <original>G</original>
    <variation>V</variation>
    <location>
        <position position="2840"/>
    </location>
</feature>
<feature type="mutagenesis site" description="No effect." evidence="23">
    <original>A</original>
    <variation>N</variation>
    <location>
        <position position="2841"/>
    </location>
</feature>
<feature type="mutagenesis site" description="No effect." evidence="23">
    <original>V</original>
    <variation>N</variation>
    <variation>M</variation>
    <location>
        <position position="2842"/>
    </location>
</feature>
<feature type="mutagenesis site" description="No effect." evidence="23">
    <original>V</original>
    <variation>M</variation>
    <location>
        <position position="2846"/>
    </location>
</feature>
<organismHost>
    <name type="scientific">Mus musculus</name>
    <name type="common">Mouse</name>
    <dbReference type="NCBI Taxonomy" id="10090"/>
</organismHost>
<protein>
    <recommendedName>
        <fullName>Replicase polyprotein 1a</fullName>
        <shortName>pp1a</shortName>
    </recommendedName>
    <alternativeName>
        <fullName>ORF1a polyprotein</fullName>
    </alternativeName>
    <component>
        <recommendedName>
            <fullName>Non-structural protein 1</fullName>
            <shortName>nsp1</shortName>
        </recommendedName>
        <alternativeName>
            <fullName>p28</fullName>
        </alternativeName>
    </component>
    <component>
        <recommendedName>
            <fullName>Non-structural protein 2</fullName>
            <shortName>nsp2</shortName>
        </recommendedName>
        <alternativeName>
            <fullName>p65</fullName>
        </alternativeName>
    </component>
    <component>
        <recommendedName>
            <fullName>Papain-like protease nsp3</fullName>
            <shortName>PL-PRO</shortName>
            <ecNumber>3.4.19.12</ecNumber>
            <ecNumber>3.4.22.-</ecNumber>
        </recommendedName>
        <alternativeName>
            <fullName>Non-structural protein 3</fullName>
            <shortName>nsp3</shortName>
        </alternativeName>
        <alternativeName>
            <fullName>PL1-PRO/PL2-PRO</fullName>
        </alternativeName>
        <alternativeName>
            <fullName>PL1/PL2</fullName>
        </alternativeName>
        <alternativeName>
            <fullName>PL2-PRO</fullName>
        </alternativeName>
        <alternativeName>
            <fullName>Papain-like proteinases 1/2</fullName>
        </alternativeName>
        <alternativeName>
            <fullName>p210</fullName>
        </alternativeName>
    </component>
    <component>
        <recommendedName>
            <fullName>Non-structural protein 4</fullName>
            <shortName>nsp4</shortName>
        </recommendedName>
        <alternativeName>
            <fullName>Peptide HD2</fullName>
        </alternativeName>
        <alternativeName>
            <fullName>p44</fullName>
        </alternativeName>
    </component>
    <component>
        <recommendedName>
            <fullName>3C-like proteinase nsp5</fullName>
            <shortName>3CL-PRO</shortName>
            <shortName>3CLp</shortName>
            <ecNumber>3.4.22.69</ecNumber>
        </recommendedName>
        <alternativeName>
            <fullName>M-PRO</fullName>
        </alternativeName>
        <alternativeName>
            <fullName>nsp5</fullName>
        </alternativeName>
        <alternativeName>
            <fullName>p27</fullName>
        </alternativeName>
    </component>
    <component>
        <recommendedName>
            <fullName>Non-structural protein 6</fullName>
            <shortName>nsp6</shortName>
        </recommendedName>
    </component>
    <component>
        <recommendedName>
            <fullName>Non-structural protein 7</fullName>
            <shortName>nsp7</shortName>
        </recommendedName>
        <alternativeName>
            <fullName>p10</fullName>
        </alternativeName>
    </component>
    <component>
        <recommendedName>
            <fullName>Non-structural protein 8</fullName>
            <shortName>nsp8</shortName>
        </recommendedName>
        <alternativeName>
            <fullName>p22</fullName>
        </alternativeName>
    </component>
    <component>
        <recommendedName>
            <fullName>RNA-capping enzyme subunit nsp9</fullName>
        </recommendedName>
        <alternativeName>
            <fullName>Non-structural protein 9</fullName>
            <shortName>nsp9</shortName>
            <ecNumber>2.7.7.50</ecNumber>
        </alternativeName>
        <alternativeName>
            <fullName>p12</fullName>
        </alternativeName>
    </component>
    <component>
        <recommendedName>
            <fullName>Non-structural protein 10</fullName>
            <shortName>nsp10</shortName>
        </recommendedName>
        <alternativeName>
            <fullName>Growth factor-like peptide</fullName>
            <shortName>GFL</shortName>
        </alternativeName>
        <alternativeName>
            <fullName>p15</fullName>
        </alternativeName>
    </component>
    <component>
        <recommendedName>
            <fullName>Non-structural protein 11</fullName>
            <shortName>nsp11</shortName>
        </recommendedName>
    </component>
</protein>
<keyword id="KW-1072">Activation of host autophagy by virus</keyword>
<keyword id="KW-1132">Decay of host mRNAs by virus</keyword>
<keyword id="KW-1015">Disulfide bond</keyword>
<keyword id="KW-0255">Endonuclease</keyword>
<keyword id="KW-1262">Eukaryotic host gene expression shutoff by virus</keyword>
<keyword id="KW-1193">Eukaryotic host translation shutoff by virus</keyword>
<keyword id="KW-1035">Host cytoplasm</keyword>
<keyword id="KW-1190">Host gene expression shutoff by virus</keyword>
<keyword id="KW-1043">Host membrane</keyword>
<keyword id="KW-1192">Host mRNA suppression by virus</keyword>
<keyword id="KW-0945">Host-virus interaction</keyword>
<keyword id="KW-0378">Hydrolase</keyword>
<keyword id="KW-1090">Inhibition of host innate immune response by virus</keyword>
<keyword id="KW-1114">Inhibition of host interferon signaling pathway by virus</keyword>
<keyword id="KW-1092">Inhibition of host IRF3 by virus</keyword>
<keyword id="KW-1095">Inhibition of host ISG15 by virus</keyword>
<keyword id="KW-1113">Inhibition of host RLR pathway by virus</keyword>
<keyword id="KW-0922">Interferon antiviral system evasion</keyword>
<keyword id="KW-0472">Membrane</keyword>
<keyword id="KW-0479">Metal-binding</keyword>
<keyword id="KW-0489">Methyltransferase</keyword>
<keyword id="KW-1127">Modulation of host ubiquitin pathway by viral deubiquitinase</keyword>
<keyword id="KW-1130">Modulation of host ubiquitin pathway by virus</keyword>
<keyword id="KW-0540">Nuclease</keyword>
<keyword id="KW-0645">Protease</keyword>
<keyword id="KW-0677">Repeat</keyword>
<keyword id="KW-0688">Ribosomal frameshifting</keyword>
<keyword id="KW-0694">RNA-binding</keyword>
<keyword id="KW-0788">Thiol protease</keyword>
<keyword id="KW-0808">Transferase</keyword>
<keyword id="KW-0812">Transmembrane</keyword>
<keyword id="KW-1133">Transmembrane helix</keyword>
<keyword id="KW-0833">Ubl conjugation pathway</keyword>
<keyword id="KW-0899">Viral immunoevasion</keyword>
<keyword id="KW-0862">Zinc</keyword>
<keyword id="KW-0863">Zinc-finger</keyword>
<name>R1A_CVMJH</name>
<comment type="function">
    <text evidence="1">The papain-like proteinase 1 (PL1-PRO) and papain-like proteinase 2 (PL2-PRO) are responsible for the cleavages located at the N-terminus of the replicase polyprotein. In addition, PLP2 possesses a deubiquitinating/deISGylating activity and processes both 'Lys-48'- and 'Lys-63'-linked polyubiquitin chains from cellular substrates. Antagonizes innate immune induction of type I interferon by blocking the phosphorylation, dimerization and subsequent nuclear translocation of host IRF-3 (By similarity).</text>
</comment>
<comment type="function">
    <molecule>3C-like proteinase nsp5</molecule>
    <text evidence="7">Responsible for the majority of cleavages as it cleaves the C-terminus of replicase polyprotein at 11 sites. Recognizes substrates containing the core sequence [ILMVF]-Q-|-[SGACN]. Inhibited by the substrate-analog Cbz-Val-Asn-Ser-Thr-Leu-Gln-CMK. Also contains an ADP-ribose-1''-phosphate (ADRP)-binding function (By similarity).</text>
</comment>
<comment type="function">
    <text evidence="1">Nsp7-nsp8 hexadecamer may possibly confer processivity to the polymerase, maybe by binding to dsRNA or by producing primers utilized by the latter.</text>
</comment>
<comment type="function">
    <molecule>RNA-capping enzyme subunit nsp9</molecule>
    <text evidence="2">Catalytic subunit of viral RNA capping enzyme which catalyzes the RNA guanylyltransferase reaction for genomic and sub-genomic RNAs. The kinase-like NiRAN domain of NSP12 transfers RNA to the amino terminus of NSP9, forming a covalent RNA-protein intermediate. Subsequently, the NiRAN domain transfers RNA to GDP, forming the core cap structure GpppA-RNA. The NSP14 and NSP16 methyltransferases then add methyl groups to form functional cap structures.</text>
</comment>
<comment type="function">
    <molecule>Non-structural protein 1</molecule>
    <text evidence="1">Binds to the 40S ribosomal subunit and inhibits host translation. The nsp1-40S ribosome complex further induces an endonucleolytic cleavage near the 5'UTR of host mRNAs, targeting them for degradation. By suppressing host gene expression, nsp1 facilitates efficient viral gene expression in infected cells and evasion from host immune response (By similarity).</text>
</comment>
<comment type="catalytic activity">
    <molecule>Papain-like protease nsp3</molecule>
    <reaction evidence="2">
        <text>Thiol-dependent hydrolysis of ester, thioester, amide, peptide and isopeptide bonds formed by the C-terminal Gly of ubiquitin (a 76-residue protein attached to proteins as an intracellular targeting signal).</text>
        <dbReference type="EC" id="3.4.19.12"/>
    </reaction>
</comment>
<comment type="catalytic activity">
    <molecule>3C-like proteinase nsp5</molecule>
    <reaction evidence="2">
        <text>TSAVLQ-|-SGFRK-NH2 and SGVTFQ-|-GKFKK the two peptides corresponding to the two self-cleavage sites of the SARS 3C-like proteinase are the two most reactive peptide substrates. The enzyme exhibits a strong preference for substrates containing Gln at P1 position and Leu at P2 position.</text>
        <dbReference type="EC" id="3.4.22.69"/>
    </reaction>
</comment>
<comment type="catalytic activity">
    <molecule>RNA-capping enzyme subunit nsp9</molecule>
    <reaction evidence="2">
        <text>a 5'-end diphospho-ribonucleoside in mRNA + GTP + H(+) = a 5'-end (5'-triphosphoguanosine)-ribonucleoside in mRNA + diphosphate</text>
        <dbReference type="Rhea" id="RHEA:67012"/>
        <dbReference type="Rhea" id="RHEA-COMP:17165"/>
        <dbReference type="Rhea" id="RHEA-COMP:17166"/>
        <dbReference type="ChEBI" id="CHEBI:15378"/>
        <dbReference type="ChEBI" id="CHEBI:33019"/>
        <dbReference type="ChEBI" id="CHEBI:37565"/>
        <dbReference type="ChEBI" id="CHEBI:167616"/>
        <dbReference type="ChEBI" id="CHEBI:167617"/>
        <dbReference type="EC" id="2.7.7.50"/>
    </reaction>
    <physiologicalReaction direction="right-to-left" evidence="2">
        <dbReference type="Rhea" id="RHEA:67014"/>
    </physiologicalReaction>
</comment>
<comment type="subunit">
    <text evidence="1">3CL-PRO exists as monomer and homodimer. Eight copies of nsp7 and eight copies of nsp8 assemble to form a heterohexadecamer. Nsp9 is a dimer. Nsp10 forms a dodecamer (By similarity).</text>
</comment>
<comment type="subcellular location">
    <molecule>Papain-like protease nsp3</molecule>
    <subcellularLocation>
        <location evidence="24">Host membrane</location>
        <topology evidence="24">Multi-pass membrane protein</topology>
    </subcellularLocation>
</comment>
<comment type="subcellular location">
    <molecule>Non-structural protein 4</molecule>
    <subcellularLocation>
        <location evidence="24">Host membrane</location>
        <topology evidence="24">Multi-pass membrane protein</topology>
    </subcellularLocation>
</comment>
<comment type="subcellular location">
    <molecule>Non-structural protein 6</molecule>
    <subcellularLocation>
        <location evidence="24">Host membrane</location>
        <topology evidence="24">Multi-pass membrane protein</topology>
    </subcellularLocation>
</comment>
<comment type="subcellular location">
    <molecule>Non-structural protein 7</molecule>
    <subcellularLocation>
        <location evidence="1">Host cytoplasm</location>
        <location evidence="1">Host perinuclear region</location>
    </subcellularLocation>
    <text evidence="1">nsp7, nsp8, nsp9 and nsp10 are localized in cytoplasmic foci, largely perinuclear. Late in infection, they merge into confluent complexes (By similarity).</text>
</comment>
<comment type="subcellular location">
    <molecule>Non-structural protein 8</molecule>
    <subcellularLocation>
        <location evidence="1">Host cytoplasm</location>
        <location evidence="1">Host perinuclear region</location>
    </subcellularLocation>
    <text evidence="1">nsp7, nsp8, nsp9 and nsp10 are localized in cytoplasmic foci, largely perinuclear. Late in infection, they merge into confluent complexes (By similarity).</text>
</comment>
<comment type="subcellular location">
    <molecule>RNA-capping enzyme subunit nsp9</molecule>
    <subcellularLocation>
        <location evidence="1">Host cytoplasm</location>
        <location evidence="1">Host perinuclear region</location>
    </subcellularLocation>
    <text evidence="1">nsp7, nsp8, nsp9 and nsp10 are localized in cytoplasmic foci, largely perinuclear. Late in infection, they merge into confluent complexes (By similarity).</text>
</comment>
<comment type="subcellular location">
    <molecule>Non-structural protein 10</molecule>
    <subcellularLocation>
        <location evidence="1">Host cytoplasm</location>
        <location evidence="1">Host perinuclear region</location>
    </subcellularLocation>
    <text evidence="1">nsp7, nsp8, nsp9 and nsp10 are localized in cytoplasmic foci, largely perinuclear. Late in infection, they merge into confluent complexes (By similarity).</text>
</comment>
<comment type="alternative products">
    <event type="ribosomal frameshifting"/>
    <isoform>
        <id>P0C6V1-1</id>
        <name>Replicase polyprotein 1a</name>
        <name>pp1a</name>
        <name>ORF1a polyprotein</name>
        <sequence type="displayed"/>
    </isoform>
    <isoform>
        <id>P0C6Y0-1</id>
        <name>Replicase polyprotein 1ab</name>
        <name>pp1ab</name>
        <sequence type="external"/>
    </isoform>
</comment>
<comment type="domain">
    <text>The hydrophobic domains (HD) could mediate the membrane association of the replication complex and thereby alter the architecture of the host cell membrane.</text>
</comment>
<comment type="PTM">
    <text evidence="1">Specific enzymatic cleavages in vivo by its own proteases yield mature proteins. 3CL-PRO and PL-PRO proteinases are autocatalytically processed (By similarity).</text>
</comment>
<comment type="miscellaneous">
    <molecule>Isoform Replicase polyprotein 1a</molecule>
    <text>Produced by conventional translation.</text>
</comment>
<comment type="similarity">
    <text evidence="24">Belongs to the coronaviruses polyprotein 1ab family.</text>
</comment>
<proteinExistence type="evidence at protein level"/>
<reference key="1">
    <citation type="journal article" date="1991" name="Virology">
        <title>The complete sequence (22 kilobases) of murine coronavirus gene 1 encoding the putative proteases and RNA polymerase.</title>
        <authorList>
            <person name="Lee H.-J."/>
            <person name="Shieh C.-K."/>
            <person name="Gorbalenya A.E."/>
            <person name="Koonin E.V."/>
            <person name="la Monica N."/>
            <person name="Tuler J."/>
            <person name="Bagdzhardzhyan A."/>
            <person name="Lai M.M.C."/>
        </authorList>
    </citation>
    <scope>NUCLEOTIDE SEQUENCE [GENOMIC RNA]</scope>
</reference>
<reference key="2">
    <citation type="journal article" date="1987" name="J. Virol.">
        <title>Sequence and translation of the murine coronavirus 5'-end genomic RNA reveals the N-terminal structure of the putative RNA polymerase.</title>
        <authorList>
            <person name="Soe L.H."/>
            <person name="Shieh C.-K."/>
            <person name="Baker S.C."/>
            <person name="Chang M.F."/>
            <person name="Lai M.M.C."/>
        </authorList>
    </citation>
    <scope>NUCLEOTIDE SEQUENCE [GENOMIC RNA] OF 1-595</scope>
</reference>
<reference key="3">
    <citation type="journal article" date="1994" name="Virology">
        <title>Mouse hepatitis virus strain A59 RNA polymerase gene ORF 1a: heterogeneity among MHV strains.</title>
        <authorList>
            <person name="Bonilla P.J."/>
            <person name="Gorbalenya A.E."/>
            <person name="Weiss S.R."/>
        </authorList>
    </citation>
    <scope>SEQUENCE REVISION</scope>
</reference>
<reference key="4">
    <citation type="journal article" date="1990" name="Adv. Exp. Med. Biol.">
        <title>Murine coronavirus gene 1 polyprotein contains an autoproteolytic activity.</title>
        <authorList>
            <person name="Baker S.C."/>
            <person name="La Monica N."/>
            <person name="Shieh C.K."/>
            <person name="Lai M.M."/>
        </authorList>
    </citation>
    <scope>NUCLEOTIDE SEQUENCE [GENOMIC RNA] OF 1021-1326</scope>
</reference>
<reference key="5">
    <citation type="journal article" date="2003" name="J. Virol.">
        <title>Identification of the murine coronavirus MP1 cleavage site recognized by papain-like proteinase 2.</title>
        <authorList>
            <person name="Kanjanahaluethai A."/>
            <person name="Jukneliene D."/>
            <person name="Baker S.C."/>
        </authorList>
    </citation>
    <scope>PROTEOLYTIC PROCESSING OF POLYPROTEIN</scope>
    <scope>MUTAGENESIS OF PHE-2835; SER-2836; LEU-2837; LYS-2838; GLY-2839; GLY-2840; ALA-2841; VAL-2842 AND VAL-2846</scope>
</reference>
<reference key="6">
    <citation type="journal article" date="1998" name="Virology">
        <title>Processing of the coronavirus MHV-JHM polymerase polyprotein: identification of precursors and proteolytic products spanning 400 kilodaltons of ORF1a.</title>
        <authorList>
            <person name="Schiller J.J."/>
            <person name="Kanjanahaluethai A."/>
            <person name="Baker S.C."/>
        </authorList>
    </citation>
    <scope>PROTEOLYTIC PROCESSING OF POLYPROTEIN</scope>
    <scope>SUBCELLULAR LOCATION</scope>
</reference>
<reference key="7">
    <citation type="journal article" date="2002" name="J. Gen. Virol.">
        <title>Conservation of substrate specificities among coronavirus main proteases.</title>
        <authorList>
            <person name="Hegyi A."/>
            <person name="Ziebuhr J."/>
        </authorList>
    </citation>
    <scope>PROTEOLYTIC PROCESSING OF POLYPROTEIN</scope>
</reference>
<accession>P0C6V1</accession>
<accession>P19751</accession>
<gene>
    <name type="ORF">1a</name>
</gene>
<dbReference type="EC" id="3.4.19.12"/>
<dbReference type="EC" id="3.4.22.-"/>
<dbReference type="EC" id="3.4.22.69"/>
<dbReference type="EC" id="2.7.7.50"/>
<dbReference type="EMBL" id="M55148">
    <property type="protein sequence ID" value="AAA46457.1"/>
    <property type="molecule type" value="Genomic_RNA"/>
</dbReference>
<dbReference type="EMBL" id="M18040">
    <property type="protein sequence ID" value="AAA46466.1"/>
    <property type="molecule type" value="Genomic_RNA"/>
</dbReference>
<dbReference type="EMBL" id="S51684">
    <property type="protein sequence ID" value="AAB19566.1"/>
    <property type="molecule type" value="Genomic_RNA"/>
</dbReference>
<dbReference type="PIR" id="A36815">
    <property type="entry name" value="RRIHM2"/>
</dbReference>
<dbReference type="PIR" id="B36815">
    <property type="entry name" value="VFIHJH"/>
</dbReference>
<dbReference type="RefSeq" id="YP_209230.1">
    <molecule id="P0C6V1-1"/>
    <property type="nucleotide sequence ID" value="AC_000192.1"/>
</dbReference>
<dbReference type="SMR" id="P0C6V1"/>
<dbReference type="MEROPS" id="C16.001"/>
<dbReference type="MEROPS" id="C16.006"/>
<dbReference type="MEROPS" id="C30.001"/>
<dbReference type="BRENDA" id="3.4.22.B14">
    <property type="organism ID" value="3467"/>
</dbReference>
<dbReference type="Proteomes" id="UP000007193">
    <property type="component" value="Genome"/>
</dbReference>
<dbReference type="GO" id="GO:0033644">
    <property type="term" value="C:host cell membrane"/>
    <property type="evidence" value="ECO:0007669"/>
    <property type="project" value="UniProtKB-SubCell"/>
</dbReference>
<dbReference type="GO" id="GO:0044220">
    <property type="term" value="C:host cell perinuclear region of cytoplasm"/>
    <property type="evidence" value="ECO:0007669"/>
    <property type="project" value="UniProtKB-SubCell"/>
</dbReference>
<dbReference type="GO" id="GO:0016020">
    <property type="term" value="C:membrane"/>
    <property type="evidence" value="ECO:0007669"/>
    <property type="project" value="UniProtKB-KW"/>
</dbReference>
<dbReference type="GO" id="GO:0004843">
    <property type="term" value="F:cysteine-type deubiquitinase activity"/>
    <property type="evidence" value="ECO:0007669"/>
    <property type="project" value="UniProtKB-EC"/>
</dbReference>
<dbReference type="GO" id="GO:0004197">
    <property type="term" value="F:cysteine-type endopeptidase activity"/>
    <property type="evidence" value="ECO:0000315"/>
    <property type="project" value="CACAO"/>
</dbReference>
<dbReference type="GO" id="GO:0004519">
    <property type="term" value="F:endonuclease activity"/>
    <property type="evidence" value="ECO:0007669"/>
    <property type="project" value="UniProtKB-KW"/>
</dbReference>
<dbReference type="GO" id="GO:0008168">
    <property type="term" value="F:methyltransferase activity"/>
    <property type="evidence" value="ECO:0007669"/>
    <property type="project" value="UniProtKB-KW"/>
</dbReference>
<dbReference type="GO" id="GO:0008242">
    <property type="term" value="F:omega peptidase activity"/>
    <property type="evidence" value="ECO:0007669"/>
    <property type="project" value="InterPro"/>
</dbReference>
<dbReference type="GO" id="GO:0003968">
    <property type="term" value="F:RNA-directed RNA polymerase activity"/>
    <property type="evidence" value="ECO:0007669"/>
    <property type="project" value="InterPro"/>
</dbReference>
<dbReference type="GO" id="GO:0003727">
    <property type="term" value="F:single-stranded RNA binding"/>
    <property type="evidence" value="ECO:0007669"/>
    <property type="project" value="InterPro"/>
</dbReference>
<dbReference type="GO" id="GO:0008270">
    <property type="term" value="F:zinc ion binding"/>
    <property type="evidence" value="ECO:0007669"/>
    <property type="project" value="UniProtKB-KW"/>
</dbReference>
<dbReference type="GO" id="GO:0032259">
    <property type="term" value="P:methylation"/>
    <property type="evidence" value="ECO:0007669"/>
    <property type="project" value="UniProtKB-KW"/>
</dbReference>
<dbReference type="GO" id="GO:0010506">
    <property type="term" value="P:regulation of autophagy"/>
    <property type="evidence" value="ECO:0007669"/>
    <property type="project" value="InterPro"/>
</dbReference>
<dbReference type="GO" id="GO:0097264">
    <property type="term" value="P:self proteolysis"/>
    <property type="evidence" value="ECO:0000314"/>
    <property type="project" value="CACAO"/>
</dbReference>
<dbReference type="GO" id="GO:0039520">
    <property type="term" value="P:symbiont-mediated activation of host autophagy"/>
    <property type="evidence" value="ECO:0007669"/>
    <property type="project" value="UniProtKB-KW"/>
</dbReference>
<dbReference type="GO" id="GO:0039595">
    <property type="term" value="P:symbiont-mediated degradation of host mRNA"/>
    <property type="evidence" value="ECO:0007669"/>
    <property type="project" value="UniProtKB-KW"/>
</dbReference>
<dbReference type="GO" id="GO:0039648">
    <property type="term" value="P:symbiont-mediated perturbation of host ubiquitin-like protein modification"/>
    <property type="evidence" value="ECO:0007669"/>
    <property type="project" value="UniProtKB-KW"/>
</dbReference>
<dbReference type="GO" id="GO:0039548">
    <property type="term" value="P:symbiont-mediated suppression of host cytoplasmic pattern recognition receptor signaling pathway via inhibition of IRF3 activity"/>
    <property type="evidence" value="ECO:0007669"/>
    <property type="project" value="UniProtKB-KW"/>
</dbReference>
<dbReference type="GO" id="GO:0039657">
    <property type="term" value="P:symbiont-mediated suppression of host gene expression"/>
    <property type="evidence" value="ECO:0007669"/>
    <property type="project" value="UniProtKB-KW"/>
</dbReference>
<dbReference type="GO" id="GO:0039579">
    <property type="term" value="P:symbiont-mediated suppression of host ISG15-protein conjugation"/>
    <property type="evidence" value="ECO:0007669"/>
    <property type="project" value="UniProtKB-KW"/>
</dbReference>
<dbReference type="GO" id="GO:0039502">
    <property type="term" value="P:symbiont-mediated suppression of host type I interferon-mediated signaling pathway"/>
    <property type="evidence" value="ECO:0007669"/>
    <property type="project" value="UniProtKB-KW"/>
</dbReference>
<dbReference type="GO" id="GO:0019079">
    <property type="term" value="P:viral genome replication"/>
    <property type="evidence" value="ECO:0007669"/>
    <property type="project" value="InterPro"/>
</dbReference>
<dbReference type="GO" id="GO:0019082">
    <property type="term" value="P:viral protein processing"/>
    <property type="evidence" value="ECO:0007669"/>
    <property type="project" value="InterPro"/>
</dbReference>
<dbReference type="GO" id="GO:0075523">
    <property type="term" value="P:viral translational frameshifting"/>
    <property type="evidence" value="ECO:0007669"/>
    <property type="project" value="UniProtKB-KW"/>
</dbReference>
<dbReference type="CDD" id="cd21901">
    <property type="entry name" value="alpha_betaCoV_Nsp10"/>
    <property type="match status" value="1"/>
</dbReference>
<dbReference type="CDD" id="cd21560">
    <property type="entry name" value="betaCoV-Nsp6"/>
    <property type="match status" value="1"/>
</dbReference>
<dbReference type="CDD" id="cd21519">
    <property type="entry name" value="betaCoV_Nsp2_MHV-like"/>
    <property type="match status" value="1"/>
</dbReference>
<dbReference type="CDD" id="cd21666">
    <property type="entry name" value="betaCoV_Nsp5_Mpro"/>
    <property type="match status" value="1"/>
</dbReference>
<dbReference type="CDD" id="cd21827">
    <property type="entry name" value="betaCoV_Nsp7"/>
    <property type="match status" value="1"/>
</dbReference>
<dbReference type="CDD" id="cd21831">
    <property type="entry name" value="betaCoV_Nsp8"/>
    <property type="match status" value="1"/>
</dbReference>
<dbReference type="CDD" id="cd21898">
    <property type="entry name" value="betaCoV_Nsp9"/>
    <property type="match status" value="1"/>
</dbReference>
<dbReference type="CDD" id="cd21732">
    <property type="entry name" value="betaCoV_PLPro"/>
    <property type="match status" value="1"/>
</dbReference>
<dbReference type="CDD" id="cd21473">
    <property type="entry name" value="cv_Nsp4_TM"/>
    <property type="match status" value="1"/>
</dbReference>
<dbReference type="CDD" id="cd21524">
    <property type="entry name" value="DPUP_MHV_Nsp3"/>
    <property type="match status" value="1"/>
</dbReference>
<dbReference type="CDD" id="cd21879">
    <property type="entry name" value="MHV-like_Nsp1"/>
    <property type="match status" value="1"/>
</dbReference>
<dbReference type="CDD" id="cd21812">
    <property type="entry name" value="MHV-like_Nsp3_betaSM"/>
    <property type="match status" value="1"/>
</dbReference>
<dbReference type="CDD" id="cd21824">
    <property type="entry name" value="MHV-like_Nsp3_NAB"/>
    <property type="match status" value="1"/>
</dbReference>
<dbReference type="CDD" id="cd21714">
    <property type="entry name" value="TM_Y_MHV-like_Nsp3_C"/>
    <property type="match status" value="1"/>
</dbReference>
<dbReference type="CDD" id="cd21467">
    <property type="entry name" value="Ubl1_cv_Nsp3_N-like"/>
    <property type="match status" value="1"/>
</dbReference>
<dbReference type="FunFam" id="1.10.150.420:FF:000001">
    <property type="entry name" value="Replicase polyprotein"/>
    <property type="match status" value="1"/>
</dbReference>
<dbReference type="FunFam" id="2.40.10.10:FF:000045">
    <property type="entry name" value="Replicase polyprotein 1a"/>
    <property type="match status" value="1"/>
</dbReference>
<dbReference type="FunFam" id="2.40.10.250:FF:000002">
    <property type="entry name" value="Replicase polyprotein 1a"/>
    <property type="match status" value="1"/>
</dbReference>
<dbReference type="Gene3D" id="1.10.8.1190">
    <property type="match status" value="2"/>
</dbReference>
<dbReference type="Gene3D" id="2.60.120.1680">
    <property type="match status" value="1"/>
</dbReference>
<dbReference type="Gene3D" id="3.10.20.350">
    <property type="match status" value="1"/>
</dbReference>
<dbReference type="Gene3D" id="3.10.20.540">
    <property type="match status" value="1"/>
</dbReference>
<dbReference type="Gene3D" id="6.10.140.2090">
    <property type="match status" value="1"/>
</dbReference>
<dbReference type="Gene3D" id="1.10.150.420">
    <property type="entry name" value="Coronavirus nonstructural protein 4 C-terminus"/>
    <property type="match status" value="1"/>
</dbReference>
<dbReference type="Gene3D" id="3.40.220.10">
    <property type="entry name" value="Leucine Aminopeptidase, subunit E, domain 1"/>
    <property type="match status" value="1"/>
</dbReference>
<dbReference type="Gene3D" id="1.10.1840.10">
    <property type="entry name" value="main proteinase (3clpro) structure, domain 3"/>
    <property type="match status" value="1"/>
</dbReference>
<dbReference type="Gene3D" id="1.10.8.370">
    <property type="entry name" value="nsp7 replicase"/>
    <property type="match status" value="1"/>
</dbReference>
<dbReference type="Gene3D" id="3.30.70.3540">
    <property type="entry name" value="Nsp8 replicase, head domain"/>
    <property type="match status" value="1"/>
</dbReference>
<dbReference type="Gene3D" id="2.40.10.250">
    <property type="entry name" value="Replicase NSP9"/>
    <property type="match status" value="1"/>
</dbReference>
<dbReference type="Gene3D" id="3.40.50.11020">
    <property type="entry name" value="Replicase polyprotein, nucleic acid-binding domain"/>
    <property type="match status" value="1"/>
</dbReference>
<dbReference type="Gene3D" id="2.40.10.10">
    <property type="entry name" value="Trypsin-like serine proteases"/>
    <property type="match status" value="2"/>
</dbReference>
<dbReference type="InterPro" id="IPR046443">
    <property type="entry name" value="a/bCoV_NSP1_glob"/>
</dbReference>
<dbReference type="InterPro" id="IPR022570">
    <property type="entry name" value="B-CoV_A_NSP1"/>
</dbReference>
<dbReference type="InterPro" id="IPR046442">
    <property type="entry name" value="bCoV_NSP1_C"/>
</dbReference>
<dbReference type="InterPro" id="IPR043613">
    <property type="entry name" value="CoV_NSP2_C"/>
</dbReference>
<dbReference type="InterPro" id="IPR047573">
    <property type="entry name" value="CoV_NSP2_M"/>
</dbReference>
<dbReference type="InterPro" id="IPR049894">
    <property type="entry name" value="COV_NSP3_3ECTO"/>
</dbReference>
<dbReference type="InterPro" id="IPR043611">
    <property type="entry name" value="CoV_NSP3_C"/>
</dbReference>
<dbReference type="InterPro" id="IPR047566">
    <property type="entry name" value="CoV_NSP3_Y"/>
</dbReference>
<dbReference type="InterPro" id="IPR032505">
    <property type="entry name" value="CoV_NSP4_C"/>
</dbReference>
<dbReference type="InterPro" id="IPR043612">
    <property type="entry name" value="CoV_NSP4_N"/>
</dbReference>
<dbReference type="InterPro" id="IPR022733">
    <property type="entry name" value="DPUP_SUD_C_bCoV"/>
</dbReference>
<dbReference type="InterPro" id="IPR002589">
    <property type="entry name" value="Macro_dom"/>
</dbReference>
<dbReference type="InterPro" id="IPR043472">
    <property type="entry name" value="Macro_dom-like"/>
</dbReference>
<dbReference type="InterPro" id="IPR036333">
    <property type="entry name" value="NSP10_sf_CoV"/>
</dbReference>
<dbReference type="InterPro" id="IPR044384">
    <property type="entry name" value="NSP2_MHV-like"/>
</dbReference>
<dbReference type="InterPro" id="IPR043615">
    <property type="entry name" value="NSP2_N_CoV"/>
</dbReference>
<dbReference type="InterPro" id="IPR044381">
    <property type="entry name" value="NSP3_DPUP_MHV"/>
</dbReference>
<dbReference type="InterPro" id="IPR047567">
    <property type="entry name" value="NSP3_G2M_bCoV"/>
</dbReference>
<dbReference type="InterPro" id="IPR032592">
    <property type="entry name" value="NSP3_NAB_bCoV"/>
</dbReference>
<dbReference type="InterPro" id="IPR042570">
    <property type="entry name" value="NSP3_NAB_bCoV_sf"/>
</dbReference>
<dbReference type="InterPro" id="IPR044357">
    <property type="entry name" value="NSP3_Ubl1_dom_CoV"/>
</dbReference>
<dbReference type="InterPro" id="IPR044353">
    <property type="entry name" value="Nsp3_Ubl2_dom_CoV"/>
</dbReference>
<dbReference type="InterPro" id="IPR038083">
    <property type="entry name" value="NSP3A-like"/>
</dbReference>
<dbReference type="InterPro" id="IPR038123">
    <property type="entry name" value="NSP4_C_sf_CoV"/>
</dbReference>
<dbReference type="InterPro" id="IPR044367">
    <property type="entry name" value="NSP6_betaCoV"/>
</dbReference>
<dbReference type="InterPro" id="IPR043610">
    <property type="entry name" value="NSP6_CoV"/>
</dbReference>
<dbReference type="InterPro" id="IPR014828">
    <property type="entry name" value="NSP7_CoV"/>
</dbReference>
<dbReference type="InterPro" id="IPR037204">
    <property type="entry name" value="NSP7_sf_CoV"/>
</dbReference>
<dbReference type="InterPro" id="IPR014829">
    <property type="entry name" value="NSP8_CoV"/>
</dbReference>
<dbReference type="InterPro" id="IPR037230">
    <property type="entry name" value="NSP8_sf_CoV"/>
</dbReference>
<dbReference type="InterPro" id="IPR014822">
    <property type="entry name" value="NSP9_CoV"/>
</dbReference>
<dbReference type="InterPro" id="IPR036499">
    <property type="entry name" value="NSP9_sf_CoV"/>
</dbReference>
<dbReference type="InterPro" id="IPR002705">
    <property type="entry name" value="Pept_C30/C16_B_coronavir"/>
</dbReference>
<dbReference type="InterPro" id="IPR013016">
    <property type="entry name" value="Peptidase_C16_CoV"/>
</dbReference>
<dbReference type="InterPro" id="IPR008740">
    <property type="entry name" value="Peptidase_C30_CoV"/>
</dbReference>
<dbReference type="InterPro" id="IPR043477">
    <property type="entry name" value="Peptidase_C30_dom3_CoV"/>
</dbReference>
<dbReference type="InterPro" id="IPR009003">
    <property type="entry name" value="Peptidase_S1_PA"/>
</dbReference>
<dbReference type="InterPro" id="IPR043504">
    <property type="entry name" value="Peptidase_S1_PA_chymotrypsin"/>
</dbReference>
<dbReference type="InterPro" id="IPR043177">
    <property type="entry name" value="PLpro_N_sf_CoV"/>
</dbReference>
<dbReference type="InterPro" id="IPR043503">
    <property type="entry name" value="PLpro_palm_finger_dom_CoV"/>
</dbReference>
<dbReference type="InterPro" id="IPR043178">
    <property type="entry name" value="PLpro_thumb_sf_CoV"/>
</dbReference>
<dbReference type="InterPro" id="IPR018995">
    <property type="entry name" value="RNA_synth_NSP10_CoV"/>
</dbReference>
<dbReference type="InterPro" id="IPR029063">
    <property type="entry name" value="SAM-dependent_MTases_sf"/>
</dbReference>
<dbReference type="Pfam" id="PF11963">
    <property type="entry name" value="B-CoV_A_NSP1"/>
    <property type="match status" value="2"/>
</dbReference>
<dbReference type="Pfam" id="PF16251">
    <property type="entry name" value="bCoV_NAB"/>
    <property type="match status" value="1"/>
</dbReference>
<dbReference type="Pfam" id="PF09401">
    <property type="entry name" value="CoV_NSP10"/>
    <property type="match status" value="1"/>
</dbReference>
<dbReference type="Pfam" id="PF19218">
    <property type="entry name" value="CoV_NSP3_C"/>
    <property type="match status" value="1"/>
</dbReference>
<dbReference type="Pfam" id="PF16348">
    <property type="entry name" value="CoV_NSP4_C"/>
    <property type="match status" value="1"/>
</dbReference>
<dbReference type="Pfam" id="PF19217">
    <property type="entry name" value="CoV_NSP4_N"/>
    <property type="match status" value="1"/>
</dbReference>
<dbReference type="Pfam" id="PF19213">
    <property type="entry name" value="CoV_NSP6"/>
    <property type="match status" value="1"/>
</dbReference>
<dbReference type="Pfam" id="PF08716">
    <property type="entry name" value="CoV_NSP7"/>
    <property type="match status" value="1"/>
</dbReference>
<dbReference type="Pfam" id="PF08717">
    <property type="entry name" value="CoV_NSP8"/>
    <property type="match status" value="1"/>
</dbReference>
<dbReference type="Pfam" id="PF08710">
    <property type="entry name" value="CoV_NSP9"/>
    <property type="match status" value="1"/>
</dbReference>
<dbReference type="Pfam" id="PF08715">
    <property type="entry name" value="CoV_peptidase"/>
    <property type="match status" value="1"/>
</dbReference>
<dbReference type="Pfam" id="PF01661">
    <property type="entry name" value="Macro"/>
    <property type="match status" value="1"/>
</dbReference>
<dbReference type="Pfam" id="PF22104">
    <property type="entry name" value="MHV_Nsp3_DPUP"/>
    <property type="match status" value="1"/>
</dbReference>
<dbReference type="Pfam" id="PF01831">
    <property type="entry name" value="Peptidase_C16"/>
    <property type="match status" value="1"/>
</dbReference>
<dbReference type="Pfam" id="PF05409">
    <property type="entry name" value="Peptidase_C30"/>
    <property type="match status" value="1"/>
</dbReference>
<dbReference type="SMART" id="SM00506">
    <property type="entry name" value="A1pp"/>
    <property type="match status" value="1"/>
</dbReference>
<dbReference type="SUPFAM" id="SSF144246">
    <property type="entry name" value="Coronavirus NSP10-like"/>
    <property type="match status" value="1"/>
</dbReference>
<dbReference type="SUPFAM" id="SSF140367">
    <property type="entry name" value="Coronavirus NSP7-like"/>
    <property type="match status" value="1"/>
</dbReference>
<dbReference type="SUPFAM" id="SSF143076">
    <property type="entry name" value="Coronavirus NSP8-like"/>
    <property type="match status" value="1"/>
</dbReference>
<dbReference type="SUPFAM" id="SSF52949">
    <property type="entry name" value="Macro domain-like"/>
    <property type="match status" value="1"/>
</dbReference>
<dbReference type="SUPFAM" id="SSF159936">
    <property type="entry name" value="NSP3A-like"/>
    <property type="match status" value="1"/>
</dbReference>
<dbReference type="SUPFAM" id="SSF101816">
    <property type="entry name" value="Replicase NSP9"/>
    <property type="match status" value="1"/>
</dbReference>
<dbReference type="SUPFAM" id="SSF53335">
    <property type="entry name" value="S-adenosyl-L-methionine-dependent methyltransferases"/>
    <property type="match status" value="1"/>
</dbReference>
<dbReference type="SUPFAM" id="SSF50494">
    <property type="entry name" value="Trypsin-like serine proteases"/>
    <property type="match status" value="1"/>
</dbReference>
<dbReference type="PROSITE" id="PS51963">
    <property type="entry name" value="BCOV_NSP1_C"/>
    <property type="match status" value="1"/>
</dbReference>
<dbReference type="PROSITE" id="PS51942">
    <property type="entry name" value="BCOV_NSP3C_C"/>
    <property type="match status" value="1"/>
</dbReference>
<dbReference type="PROSITE" id="PS51994">
    <property type="entry name" value="BCOV_NSP3E_G2M"/>
    <property type="match status" value="1"/>
</dbReference>
<dbReference type="PROSITE" id="PS51945">
    <property type="entry name" value="BCOV_NSP3E_NAB"/>
    <property type="match status" value="1"/>
</dbReference>
<dbReference type="PROSITE" id="PS51993">
    <property type="entry name" value="COV_3ECTO"/>
    <property type="match status" value="1"/>
</dbReference>
<dbReference type="PROSITE" id="PS51952">
    <property type="entry name" value="COV_EXON_MTASE_COACT"/>
    <property type="match status" value="1"/>
</dbReference>
<dbReference type="PROSITE" id="PS51962">
    <property type="entry name" value="COV_NSP1"/>
    <property type="match status" value="1"/>
</dbReference>
<dbReference type="PROSITE" id="PS51991">
    <property type="entry name" value="COV_NSP2_C"/>
    <property type="match status" value="1"/>
</dbReference>
<dbReference type="PROSITE" id="PS51990">
    <property type="entry name" value="COV_NSP2_M"/>
    <property type="match status" value="1"/>
</dbReference>
<dbReference type="PROSITE" id="PS51989">
    <property type="entry name" value="COV_NSP2_N"/>
    <property type="match status" value="1"/>
</dbReference>
<dbReference type="PROSITE" id="PS51992">
    <property type="entry name" value="COV_NSP3_Y"/>
    <property type="match status" value="1"/>
</dbReference>
<dbReference type="PROSITE" id="PS51943">
    <property type="entry name" value="COV_NSP3A_UBL"/>
    <property type="match status" value="1"/>
</dbReference>
<dbReference type="PROSITE" id="PS51944">
    <property type="entry name" value="COV_NSP3D_UBL"/>
    <property type="match status" value="1"/>
</dbReference>
<dbReference type="PROSITE" id="PS51946">
    <property type="entry name" value="COV_NSP4C"/>
    <property type="match status" value="1"/>
</dbReference>
<dbReference type="PROSITE" id="PS51949">
    <property type="entry name" value="COV_NSP7"/>
    <property type="match status" value="1"/>
</dbReference>
<dbReference type="PROSITE" id="PS51950">
    <property type="entry name" value="COV_NSP8"/>
    <property type="match status" value="1"/>
</dbReference>
<dbReference type="PROSITE" id="PS51951">
    <property type="entry name" value="COV_NSP9_SSRNA_BD"/>
    <property type="match status" value="1"/>
</dbReference>
<dbReference type="PROSITE" id="PS51442">
    <property type="entry name" value="M_PRO"/>
    <property type="match status" value="1"/>
</dbReference>
<dbReference type="PROSITE" id="PS51154">
    <property type="entry name" value="MACRO"/>
    <property type="match status" value="1"/>
</dbReference>
<dbReference type="PROSITE" id="PS51124">
    <property type="entry name" value="PEPTIDASE_C16"/>
    <property type="match status" value="2"/>
</dbReference>
<organism>
    <name type="scientific">Murine coronavirus (strain JHM)</name>
    <name type="common">MHV-JHM</name>
    <name type="synonym">Murine hepatitis virus</name>
    <dbReference type="NCBI Taxonomy" id="11144"/>
    <lineage>
        <taxon>Viruses</taxon>
        <taxon>Riboviria</taxon>
        <taxon>Orthornavirae</taxon>
        <taxon>Pisuviricota</taxon>
        <taxon>Pisoniviricetes</taxon>
        <taxon>Nidovirales</taxon>
        <taxon>Cornidovirineae</taxon>
        <taxon>Coronaviridae</taxon>
        <taxon>Orthocoronavirinae</taxon>
        <taxon>Betacoronavirus</taxon>
        <taxon>Embecovirus</taxon>
        <taxon>Murine coronavirus</taxon>
    </lineage>
</organism>